<protein>
    <recommendedName>
        <fullName evidence="1">Small ribosomal subunit protein uS8</fullName>
    </recommendedName>
    <alternativeName>
        <fullName evidence="2">30S ribosomal protein S8</fullName>
    </alternativeName>
</protein>
<organism>
    <name type="scientific">Bacillus cereus (strain AH187)</name>
    <dbReference type="NCBI Taxonomy" id="405534"/>
    <lineage>
        <taxon>Bacteria</taxon>
        <taxon>Bacillati</taxon>
        <taxon>Bacillota</taxon>
        <taxon>Bacilli</taxon>
        <taxon>Bacillales</taxon>
        <taxon>Bacillaceae</taxon>
        <taxon>Bacillus</taxon>
        <taxon>Bacillus cereus group</taxon>
    </lineage>
</organism>
<name>RS8_BACC7</name>
<comment type="function">
    <text evidence="1">One of the primary rRNA binding proteins, it binds directly to 16S rRNA central domain where it helps coordinate assembly of the platform of the 30S subunit.</text>
</comment>
<comment type="subunit">
    <text evidence="1">Part of the 30S ribosomal subunit. Contacts proteins S5 and S12.</text>
</comment>
<comment type="similarity">
    <text evidence="1">Belongs to the universal ribosomal protein uS8 family.</text>
</comment>
<keyword id="KW-0687">Ribonucleoprotein</keyword>
<keyword id="KW-0689">Ribosomal protein</keyword>
<keyword id="KW-0694">RNA-binding</keyword>
<keyword id="KW-0699">rRNA-binding</keyword>
<evidence type="ECO:0000255" key="1">
    <source>
        <dbReference type="HAMAP-Rule" id="MF_01302"/>
    </source>
</evidence>
<evidence type="ECO:0000305" key="2"/>
<feature type="chain" id="PRO_1000140512" description="Small ribosomal subunit protein uS8">
    <location>
        <begin position="1"/>
        <end position="132"/>
    </location>
</feature>
<dbReference type="EMBL" id="CP001177">
    <property type="protein sequence ID" value="ACJ81160.1"/>
    <property type="molecule type" value="Genomic_DNA"/>
</dbReference>
<dbReference type="SMR" id="B7HQV8"/>
<dbReference type="KEGG" id="bcr:BCAH187_A0155"/>
<dbReference type="HOGENOM" id="CLU_098428_0_2_9"/>
<dbReference type="Proteomes" id="UP000002214">
    <property type="component" value="Chromosome"/>
</dbReference>
<dbReference type="GO" id="GO:1990904">
    <property type="term" value="C:ribonucleoprotein complex"/>
    <property type="evidence" value="ECO:0007669"/>
    <property type="project" value="UniProtKB-KW"/>
</dbReference>
<dbReference type="GO" id="GO:0005840">
    <property type="term" value="C:ribosome"/>
    <property type="evidence" value="ECO:0007669"/>
    <property type="project" value="UniProtKB-KW"/>
</dbReference>
<dbReference type="GO" id="GO:0019843">
    <property type="term" value="F:rRNA binding"/>
    <property type="evidence" value="ECO:0007669"/>
    <property type="project" value="UniProtKB-UniRule"/>
</dbReference>
<dbReference type="GO" id="GO:0003735">
    <property type="term" value="F:structural constituent of ribosome"/>
    <property type="evidence" value="ECO:0007669"/>
    <property type="project" value="InterPro"/>
</dbReference>
<dbReference type="GO" id="GO:0006412">
    <property type="term" value="P:translation"/>
    <property type="evidence" value="ECO:0007669"/>
    <property type="project" value="UniProtKB-UniRule"/>
</dbReference>
<dbReference type="FunFam" id="3.30.1370.30:FF:000002">
    <property type="entry name" value="30S ribosomal protein S8"/>
    <property type="match status" value="1"/>
</dbReference>
<dbReference type="FunFam" id="3.30.1490.10:FF:000001">
    <property type="entry name" value="30S ribosomal protein S8"/>
    <property type="match status" value="1"/>
</dbReference>
<dbReference type="Gene3D" id="3.30.1370.30">
    <property type="match status" value="1"/>
</dbReference>
<dbReference type="Gene3D" id="3.30.1490.10">
    <property type="match status" value="1"/>
</dbReference>
<dbReference type="HAMAP" id="MF_01302_B">
    <property type="entry name" value="Ribosomal_uS8_B"/>
    <property type="match status" value="1"/>
</dbReference>
<dbReference type="InterPro" id="IPR000630">
    <property type="entry name" value="Ribosomal_uS8"/>
</dbReference>
<dbReference type="InterPro" id="IPR047863">
    <property type="entry name" value="Ribosomal_uS8_CS"/>
</dbReference>
<dbReference type="InterPro" id="IPR035987">
    <property type="entry name" value="Ribosomal_uS8_sf"/>
</dbReference>
<dbReference type="NCBIfam" id="NF001109">
    <property type="entry name" value="PRK00136.1"/>
    <property type="match status" value="1"/>
</dbReference>
<dbReference type="PANTHER" id="PTHR11758">
    <property type="entry name" value="40S RIBOSOMAL PROTEIN S15A"/>
    <property type="match status" value="1"/>
</dbReference>
<dbReference type="Pfam" id="PF00410">
    <property type="entry name" value="Ribosomal_S8"/>
    <property type="match status" value="1"/>
</dbReference>
<dbReference type="SUPFAM" id="SSF56047">
    <property type="entry name" value="Ribosomal protein S8"/>
    <property type="match status" value="1"/>
</dbReference>
<dbReference type="PROSITE" id="PS00053">
    <property type="entry name" value="RIBOSOMAL_S8"/>
    <property type="match status" value="1"/>
</dbReference>
<gene>
    <name evidence="1" type="primary">rpsH</name>
    <name type="ordered locus">BCAH187_A0155</name>
</gene>
<reference key="1">
    <citation type="submission" date="2008-10" db="EMBL/GenBank/DDBJ databases">
        <title>Genome sequence of Bacillus cereus AH187.</title>
        <authorList>
            <person name="Dodson R.J."/>
            <person name="Durkin A.S."/>
            <person name="Rosovitz M.J."/>
            <person name="Rasko D.A."/>
            <person name="Kolsto A.B."/>
            <person name="Okstad O.A."/>
            <person name="Ravel J."/>
            <person name="Sutton G."/>
        </authorList>
    </citation>
    <scope>NUCLEOTIDE SEQUENCE [LARGE SCALE GENOMIC DNA]</scope>
    <source>
        <strain>AH187</strain>
    </source>
</reference>
<sequence length="132" mass="14882">MVMTDPIADMLTRIRNANMVRHEKLEVPASKIKKEIAELLKREGFIRDVEYIEDNKQGILRIFLKYGANNERVITGLKRISKPGLRVYAKADEVPRVLNGLGIALVSTSKGVMTDKDARQLQTGGEVVAYVW</sequence>
<accession>B7HQV8</accession>
<proteinExistence type="inferred from homology"/>